<name>DEOD2_PHOPR</name>
<gene>
    <name evidence="2" type="primary">deoD2</name>
    <name type="ordered locus">PBPRB0062</name>
</gene>
<dbReference type="EC" id="2.4.2.1" evidence="2"/>
<dbReference type="EMBL" id="CR378675">
    <property type="protein sequence ID" value="CAG21935.1"/>
    <property type="molecule type" value="Genomic_DNA"/>
</dbReference>
<dbReference type="SMR" id="Q6LLA7"/>
<dbReference type="STRING" id="298386.PBPRB0062"/>
<dbReference type="KEGG" id="ppr:PBPRB0062"/>
<dbReference type="eggNOG" id="COG0813">
    <property type="taxonomic scope" value="Bacteria"/>
</dbReference>
<dbReference type="HOGENOM" id="CLU_068457_2_0_6"/>
<dbReference type="Proteomes" id="UP000000593">
    <property type="component" value="Chromosome 2"/>
</dbReference>
<dbReference type="GO" id="GO:0005829">
    <property type="term" value="C:cytosol"/>
    <property type="evidence" value="ECO:0007669"/>
    <property type="project" value="TreeGrafter"/>
</dbReference>
<dbReference type="GO" id="GO:0004731">
    <property type="term" value="F:purine-nucleoside phosphorylase activity"/>
    <property type="evidence" value="ECO:0007669"/>
    <property type="project" value="UniProtKB-UniRule"/>
</dbReference>
<dbReference type="GO" id="GO:0006152">
    <property type="term" value="P:purine nucleoside catabolic process"/>
    <property type="evidence" value="ECO:0007669"/>
    <property type="project" value="TreeGrafter"/>
</dbReference>
<dbReference type="CDD" id="cd09006">
    <property type="entry name" value="PNP_EcPNPI-like"/>
    <property type="match status" value="1"/>
</dbReference>
<dbReference type="Gene3D" id="3.40.50.1580">
    <property type="entry name" value="Nucleoside phosphorylase domain"/>
    <property type="match status" value="1"/>
</dbReference>
<dbReference type="HAMAP" id="MF_01627">
    <property type="entry name" value="Pur_nucleosid_phosp"/>
    <property type="match status" value="1"/>
</dbReference>
<dbReference type="InterPro" id="IPR004402">
    <property type="entry name" value="DeoD-type"/>
</dbReference>
<dbReference type="InterPro" id="IPR018016">
    <property type="entry name" value="Nucleoside_phosphorylase_CS"/>
</dbReference>
<dbReference type="InterPro" id="IPR000845">
    <property type="entry name" value="Nucleoside_phosphorylase_d"/>
</dbReference>
<dbReference type="InterPro" id="IPR035994">
    <property type="entry name" value="Nucleoside_phosphorylase_sf"/>
</dbReference>
<dbReference type="NCBIfam" id="TIGR00107">
    <property type="entry name" value="deoD"/>
    <property type="match status" value="1"/>
</dbReference>
<dbReference type="NCBIfam" id="NF004489">
    <property type="entry name" value="PRK05819.1"/>
    <property type="match status" value="1"/>
</dbReference>
<dbReference type="NCBIfam" id="NF009914">
    <property type="entry name" value="PRK13374.1"/>
    <property type="match status" value="1"/>
</dbReference>
<dbReference type="PANTHER" id="PTHR43691:SF11">
    <property type="entry name" value="FI09636P-RELATED"/>
    <property type="match status" value="1"/>
</dbReference>
<dbReference type="PANTHER" id="PTHR43691">
    <property type="entry name" value="URIDINE PHOSPHORYLASE"/>
    <property type="match status" value="1"/>
</dbReference>
<dbReference type="Pfam" id="PF01048">
    <property type="entry name" value="PNP_UDP_1"/>
    <property type="match status" value="1"/>
</dbReference>
<dbReference type="SUPFAM" id="SSF53167">
    <property type="entry name" value="Purine and uridine phosphorylases"/>
    <property type="match status" value="1"/>
</dbReference>
<dbReference type="PROSITE" id="PS01232">
    <property type="entry name" value="PNP_UDP_1"/>
    <property type="match status" value="1"/>
</dbReference>
<accession>Q6LLA7</accession>
<protein>
    <recommendedName>
        <fullName evidence="2">Purine nucleoside phosphorylase DeoD-type 2</fullName>
        <shortName evidence="2">PNP 2</shortName>
        <ecNumber evidence="2">2.4.2.1</ecNumber>
    </recommendedName>
</protein>
<reference key="1">
    <citation type="journal article" date="2005" name="Science">
        <title>Life at depth: Photobacterium profundum genome sequence and expression analysis.</title>
        <authorList>
            <person name="Vezzi A."/>
            <person name="Campanaro S."/>
            <person name="D'Angelo M."/>
            <person name="Simonato F."/>
            <person name="Vitulo N."/>
            <person name="Lauro F.M."/>
            <person name="Cestaro A."/>
            <person name="Malacrida G."/>
            <person name="Simionati B."/>
            <person name="Cannata N."/>
            <person name="Romualdi C."/>
            <person name="Bartlett D.H."/>
            <person name="Valle G."/>
        </authorList>
    </citation>
    <scope>NUCLEOTIDE SEQUENCE [LARGE SCALE GENOMIC DNA]</scope>
    <source>
        <strain>ATCC BAA-1253 / SS9</strain>
    </source>
</reference>
<comment type="function">
    <text evidence="2">Catalyzes the reversible phosphorolytic breakdown of the N-glycosidic bond in the beta-(deoxy)ribonucleoside molecules, with the formation of the corresponding free purine bases and pentose-1-phosphate.</text>
</comment>
<comment type="catalytic activity">
    <reaction evidence="2">
        <text>a purine D-ribonucleoside + phosphate = a purine nucleobase + alpha-D-ribose 1-phosphate</text>
        <dbReference type="Rhea" id="RHEA:19805"/>
        <dbReference type="ChEBI" id="CHEBI:26386"/>
        <dbReference type="ChEBI" id="CHEBI:43474"/>
        <dbReference type="ChEBI" id="CHEBI:57720"/>
        <dbReference type="ChEBI" id="CHEBI:142355"/>
        <dbReference type="EC" id="2.4.2.1"/>
    </reaction>
</comment>
<comment type="catalytic activity">
    <reaction evidence="2">
        <text>a purine 2'-deoxy-D-ribonucleoside + phosphate = a purine nucleobase + 2-deoxy-alpha-D-ribose 1-phosphate</text>
        <dbReference type="Rhea" id="RHEA:36431"/>
        <dbReference type="ChEBI" id="CHEBI:26386"/>
        <dbReference type="ChEBI" id="CHEBI:43474"/>
        <dbReference type="ChEBI" id="CHEBI:57259"/>
        <dbReference type="ChEBI" id="CHEBI:142361"/>
        <dbReference type="EC" id="2.4.2.1"/>
    </reaction>
</comment>
<comment type="subunit">
    <text evidence="2">Homohexamer; trimer of homodimers.</text>
</comment>
<comment type="similarity">
    <text evidence="2">Belongs to the PNP/UDP phosphorylase family.</text>
</comment>
<evidence type="ECO:0000250" key="1">
    <source>
        <dbReference type="UniProtKB" id="P50389"/>
    </source>
</evidence>
<evidence type="ECO:0000255" key="2">
    <source>
        <dbReference type="HAMAP-Rule" id="MF_01627"/>
    </source>
</evidence>
<keyword id="KW-0328">Glycosyltransferase</keyword>
<keyword id="KW-1185">Reference proteome</keyword>
<keyword id="KW-0808">Transferase</keyword>
<feature type="chain" id="PRO_0000063152" description="Purine nucleoside phosphorylase DeoD-type 2">
    <location>
        <begin position="1"/>
        <end position="236"/>
    </location>
</feature>
<feature type="active site" description="Proton donor" evidence="2">
    <location>
        <position position="205"/>
    </location>
</feature>
<feature type="binding site" evidence="1">
    <location>
        <position position="5"/>
    </location>
    <ligand>
        <name>a purine D-ribonucleoside</name>
        <dbReference type="ChEBI" id="CHEBI:142355"/>
        <note>ligand shared between dimeric partners</note>
    </ligand>
</feature>
<feature type="binding site" description="in other chain" evidence="1">
    <location>
        <position position="21"/>
    </location>
    <ligand>
        <name>phosphate</name>
        <dbReference type="ChEBI" id="CHEBI:43474"/>
        <note>ligand shared between dimeric partners</note>
    </ligand>
</feature>
<feature type="binding site" description="in other chain" evidence="1">
    <location>
        <position position="25"/>
    </location>
    <ligand>
        <name>phosphate</name>
        <dbReference type="ChEBI" id="CHEBI:43474"/>
        <note>ligand shared between dimeric partners</note>
    </ligand>
</feature>
<feature type="binding site" evidence="1">
    <location>
        <position position="44"/>
    </location>
    <ligand>
        <name>phosphate</name>
        <dbReference type="ChEBI" id="CHEBI:43474"/>
        <note>ligand shared between dimeric partners</note>
    </ligand>
</feature>
<feature type="binding site" description="in other chain" evidence="1">
    <location>
        <begin position="88"/>
        <end position="91"/>
    </location>
    <ligand>
        <name>phosphate</name>
        <dbReference type="ChEBI" id="CHEBI:43474"/>
        <note>ligand shared between dimeric partners</note>
    </ligand>
</feature>
<feature type="binding site" description="in other chain" evidence="1">
    <location>
        <begin position="180"/>
        <end position="182"/>
    </location>
    <ligand>
        <name>a purine D-ribonucleoside</name>
        <dbReference type="ChEBI" id="CHEBI:142355"/>
        <note>ligand shared between dimeric partners</note>
    </ligand>
</feature>
<feature type="binding site" description="in other chain" evidence="1">
    <location>
        <begin position="204"/>
        <end position="205"/>
    </location>
    <ligand>
        <name>a purine D-ribonucleoside</name>
        <dbReference type="ChEBI" id="CHEBI:142355"/>
        <note>ligand shared between dimeric partners</note>
    </ligand>
</feature>
<feature type="site" description="Important for catalytic activity" evidence="2">
    <location>
        <position position="218"/>
    </location>
</feature>
<sequence length="236" mass="25773">MATPHINAELGDFAETVLMPGDPLRAKFIAENFLEDVKQVCDVRSMLGFTGTYKGKRVSVMGHGMGIPSCSIYVHELIKDFGVKNIIRVGSCGAVHDDVKLMDIIIGMGASTDSKVNRIRFNDHDFAAIADFHLLETSVQQARLQNVNVRVGNIFSADLFYSPEEGLFDKMEKLGMLGIDMEAAGIYGVAAELGAKALTILTVSDHIKRGEKLSSEDRQKSFGEMMNVALETAVNI</sequence>
<organism>
    <name type="scientific">Photobacterium profundum (strain SS9)</name>
    <dbReference type="NCBI Taxonomy" id="298386"/>
    <lineage>
        <taxon>Bacteria</taxon>
        <taxon>Pseudomonadati</taxon>
        <taxon>Pseudomonadota</taxon>
        <taxon>Gammaproteobacteria</taxon>
        <taxon>Vibrionales</taxon>
        <taxon>Vibrionaceae</taxon>
        <taxon>Photobacterium</taxon>
    </lineage>
</organism>
<proteinExistence type="inferred from homology"/>